<reference key="1">
    <citation type="journal article" date="2011" name="Appl. Environ. Microbiol.">
        <title>Genomic potential of Marinobacter aquaeolei, a biogeochemical 'opportunitroph'.</title>
        <authorList>
            <person name="Singer E."/>
            <person name="Webb E.A."/>
            <person name="Nelson W.C."/>
            <person name="Heidelberg J.F."/>
            <person name="Ivanova N."/>
            <person name="Pati A."/>
            <person name="Edwards K.J."/>
        </authorList>
    </citation>
    <scope>NUCLEOTIDE SEQUENCE [LARGE SCALE GENOMIC DNA]</scope>
    <source>
        <strain>ATCC 700491 / DSM 11845 / VT8</strain>
    </source>
</reference>
<organism>
    <name type="scientific">Marinobacter nauticus (strain ATCC 700491 / DSM 11845 / VT8)</name>
    <name type="common">Marinobacter aquaeolei</name>
    <dbReference type="NCBI Taxonomy" id="351348"/>
    <lineage>
        <taxon>Bacteria</taxon>
        <taxon>Pseudomonadati</taxon>
        <taxon>Pseudomonadota</taxon>
        <taxon>Gammaproteobacteria</taxon>
        <taxon>Pseudomonadales</taxon>
        <taxon>Marinobacteraceae</taxon>
        <taxon>Marinobacter</taxon>
    </lineage>
</organism>
<keyword id="KW-0119">Carbohydrate metabolism</keyword>
<keyword id="KW-0413">Isomerase</keyword>
<keyword id="KW-0521">NADP</keyword>
<dbReference type="EC" id="5.1.3.20" evidence="1"/>
<dbReference type="EMBL" id="CP000514">
    <property type="protein sequence ID" value="ABM17885.1"/>
    <property type="molecule type" value="Genomic_DNA"/>
</dbReference>
<dbReference type="RefSeq" id="WP_011784307.1">
    <property type="nucleotide sequence ID" value="NC_008740.1"/>
</dbReference>
<dbReference type="SMR" id="A1TYR6"/>
<dbReference type="STRING" id="351348.Maqu_0788"/>
<dbReference type="KEGG" id="maq:Maqu_0788"/>
<dbReference type="eggNOG" id="COG0451">
    <property type="taxonomic scope" value="Bacteria"/>
</dbReference>
<dbReference type="HOGENOM" id="CLU_007383_1_3_6"/>
<dbReference type="OrthoDB" id="9803010at2"/>
<dbReference type="UniPathway" id="UPA00356">
    <property type="reaction ID" value="UER00440"/>
</dbReference>
<dbReference type="Proteomes" id="UP000000998">
    <property type="component" value="Chromosome"/>
</dbReference>
<dbReference type="GO" id="GO:0008712">
    <property type="term" value="F:ADP-glyceromanno-heptose 6-epimerase activity"/>
    <property type="evidence" value="ECO:0007669"/>
    <property type="project" value="UniProtKB-UniRule"/>
</dbReference>
<dbReference type="GO" id="GO:0050661">
    <property type="term" value="F:NADP binding"/>
    <property type="evidence" value="ECO:0007669"/>
    <property type="project" value="InterPro"/>
</dbReference>
<dbReference type="GO" id="GO:0097171">
    <property type="term" value="P:ADP-L-glycero-beta-D-manno-heptose biosynthetic process"/>
    <property type="evidence" value="ECO:0007669"/>
    <property type="project" value="UniProtKB-UniPathway"/>
</dbReference>
<dbReference type="GO" id="GO:0005975">
    <property type="term" value="P:carbohydrate metabolic process"/>
    <property type="evidence" value="ECO:0007669"/>
    <property type="project" value="UniProtKB-UniRule"/>
</dbReference>
<dbReference type="CDD" id="cd05248">
    <property type="entry name" value="ADP_GME_SDR_e"/>
    <property type="match status" value="1"/>
</dbReference>
<dbReference type="Gene3D" id="3.40.50.720">
    <property type="entry name" value="NAD(P)-binding Rossmann-like Domain"/>
    <property type="match status" value="1"/>
</dbReference>
<dbReference type="Gene3D" id="3.90.25.10">
    <property type="entry name" value="UDP-galactose 4-epimerase, domain 1"/>
    <property type="match status" value="1"/>
</dbReference>
<dbReference type="HAMAP" id="MF_01601">
    <property type="entry name" value="Heptose_epimerase"/>
    <property type="match status" value="1"/>
</dbReference>
<dbReference type="InterPro" id="IPR001509">
    <property type="entry name" value="Epimerase_deHydtase"/>
</dbReference>
<dbReference type="InterPro" id="IPR011912">
    <property type="entry name" value="Heptose_epim"/>
</dbReference>
<dbReference type="InterPro" id="IPR036291">
    <property type="entry name" value="NAD(P)-bd_dom_sf"/>
</dbReference>
<dbReference type="NCBIfam" id="TIGR02197">
    <property type="entry name" value="heptose_epim"/>
    <property type="match status" value="1"/>
</dbReference>
<dbReference type="NCBIfam" id="NF008360">
    <property type="entry name" value="PRK11150.1"/>
    <property type="match status" value="1"/>
</dbReference>
<dbReference type="PANTHER" id="PTHR43103:SF3">
    <property type="entry name" value="ADP-L-GLYCERO-D-MANNO-HEPTOSE-6-EPIMERASE"/>
    <property type="match status" value="1"/>
</dbReference>
<dbReference type="PANTHER" id="PTHR43103">
    <property type="entry name" value="NUCLEOSIDE-DIPHOSPHATE-SUGAR EPIMERASE"/>
    <property type="match status" value="1"/>
</dbReference>
<dbReference type="Pfam" id="PF01370">
    <property type="entry name" value="Epimerase"/>
    <property type="match status" value="1"/>
</dbReference>
<dbReference type="SUPFAM" id="SSF51735">
    <property type="entry name" value="NAD(P)-binding Rossmann-fold domains"/>
    <property type="match status" value="1"/>
</dbReference>
<evidence type="ECO:0000255" key="1">
    <source>
        <dbReference type="HAMAP-Rule" id="MF_01601"/>
    </source>
</evidence>
<name>HLDD_MARN8</name>
<sequence length="313" mass="35621">MIVVTGGAGFIGANIIHALNLRGETDILVVDDLTDGTRFRNLAELDVTDYMDKGEFLERVKANDLPMGIRAVFHEGACSDTTEWDGKFMMENNYTYSKVLLHWCLDRKVPFLYASSAAVYGASDEFREERECERPLNVYGYSKWQFDQYVRKILPSARSQIVGFRYFNVYGPREQHKGKMASVAYHLHEQIKAGQNPKLFEGWDGYSDGGQQRDFVYVDDVCKVNLWFYDNPEQSGIFNLGTGRAQSFLDVAQAVIRYHGKGSVEFIPFPDELKGRYQSFTQADITALRDVGYTAEFADVASGVESYLAWLDR</sequence>
<comment type="function">
    <text evidence="1">Catalyzes the interconversion between ADP-D-glycero-beta-D-manno-heptose and ADP-L-glycero-beta-D-manno-heptose via an epimerization at carbon 6 of the heptose.</text>
</comment>
<comment type="catalytic activity">
    <reaction evidence="1">
        <text>ADP-D-glycero-beta-D-manno-heptose = ADP-L-glycero-beta-D-manno-heptose</text>
        <dbReference type="Rhea" id="RHEA:17577"/>
        <dbReference type="ChEBI" id="CHEBI:59967"/>
        <dbReference type="ChEBI" id="CHEBI:61506"/>
        <dbReference type="EC" id="5.1.3.20"/>
    </reaction>
</comment>
<comment type="cofactor">
    <cofactor evidence="1">
        <name>NADP(+)</name>
        <dbReference type="ChEBI" id="CHEBI:58349"/>
    </cofactor>
    <text evidence="1">Binds 1 NADP(+) per subunit.</text>
</comment>
<comment type="pathway">
    <text evidence="1">Nucleotide-sugar biosynthesis; ADP-L-glycero-beta-D-manno-heptose biosynthesis; ADP-L-glycero-beta-D-manno-heptose from D-glycero-beta-D-manno-heptose 7-phosphate: step 4/4.</text>
</comment>
<comment type="subunit">
    <text evidence="1">Homopentamer.</text>
</comment>
<comment type="domain">
    <text evidence="1">Contains a large N-terminal NADP-binding domain, and a smaller C-terminal substrate-binding domain.</text>
</comment>
<comment type="similarity">
    <text evidence="1">Belongs to the NAD(P)-dependent epimerase/dehydratase family. HldD subfamily.</text>
</comment>
<proteinExistence type="inferred from homology"/>
<feature type="chain" id="PRO_1000069360" description="ADP-L-glycero-D-manno-heptose-6-epimerase">
    <location>
        <begin position="1"/>
        <end position="313"/>
    </location>
</feature>
<feature type="active site" description="Proton acceptor" evidence="1">
    <location>
        <position position="139"/>
    </location>
</feature>
<feature type="active site" description="Proton acceptor" evidence="1">
    <location>
        <position position="177"/>
    </location>
</feature>
<feature type="binding site" evidence="1">
    <location>
        <begin position="10"/>
        <end position="11"/>
    </location>
    <ligand>
        <name>NADP(+)</name>
        <dbReference type="ChEBI" id="CHEBI:58349"/>
    </ligand>
</feature>
<feature type="binding site" evidence="1">
    <location>
        <begin position="31"/>
        <end position="32"/>
    </location>
    <ligand>
        <name>NADP(+)</name>
        <dbReference type="ChEBI" id="CHEBI:58349"/>
    </ligand>
</feature>
<feature type="binding site" evidence="1">
    <location>
        <position position="38"/>
    </location>
    <ligand>
        <name>NADP(+)</name>
        <dbReference type="ChEBI" id="CHEBI:58349"/>
    </ligand>
</feature>
<feature type="binding site" evidence="1">
    <location>
        <position position="53"/>
    </location>
    <ligand>
        <name>NADP(+)</name>
        <dbReference type="ChEBI" id="CHEBI:58349"/>
    </ligand>
</feature>
<feature type="binding site" evidence="1">
    <location>
        <begin position="75"/>
        <end position="79"/>
    </location>
    <ligand>
        <name>NADP(+)</name>
        <dbReference type="ChEBI" id="CHEBI:58349"/>
    </ligand>
</feature>
<feature type="binding site" evidence="1">
    <location>
        <position position="92"/>
    </location>
    <ligand>
        <name>NADP(+)</name>
        <dbReference type="ChEBI" id="CHEBI:58349"/>
    </ligand>
</feature>
<feature type="binding site" evidence="1">
    <location>
        <position position="143"/>
    </location>
    <ligand>
        <name>NADP(+)</name>
        <dbReference type="ChEBI" id="CHEBI:58349"/>
    </ligand>
</feature>
<feature type="binding site" evidence="1">
    <location>
        <position position="168"/>
    </location>
    <ligand>
        <name>substrate</name>
    </ligand>
</feature>
<feature type="binding site" evidence="1">
    <location>
        <position position="169"/>
    </location>
    <ligand>
        <name>NADP(+)</name>
        <dbReference type="ChEBI" id="CHEBI:58349"/>
    </ligand>
</feature>
<feature type="binding site" evidence="1">
    <location>
        <position position="177"/>
    </location>
    <ligand>
        <name>NADP(+)</name>
        <dbReference type="ChEBI" id="CHEBI:58349"/>
    </ligand>
</feature>
<feature type="binding site" evidence="1">
    <location>
        <position position="179"/>
    </location>
    <ligand>
        <name>substrate</name>
    </ligand>
</feature>
<feature type="binding site" evidence="1">
    <location>
        <position position="186"/>
    </location>
    <ligand>
        <name>substrate</name>
    </ligand>
</feature>
<feature type="binding site" evidence="1">
    <location>
        <begin position="200"/>
        <end position="203"/>
    </location>
    <ligand>
        <name>substrate</name>
    </ligand>
</feature>
<feature type="binding site" evidence="1">
    <location>
        <position position="213"/>
    </location>
    <ligand>
        <name>substrate</name>
    </ligand>
</feature>
<feature type="binding site" evidence="1">
    <location>
        <position position="277"/>
    </location>
    <ligand>
        <name>substrate</name>
    </ligand>
</feature>
<gene>
    <name evidence="1" type="primary">hldD</name>
    <name type="ordered locus">Maqu_0788</name>
</gene>
<accession>A1TYR6</accession>
<protein>
    <recommendedName>
        <fullName evidence="1">ADP-L-glycero-D-manno-heptose-6-epimerase</fullName>
        <ecNumber evidence="1">5.1.3.20</ecNumber>
    </recommendedName>
    <alternativeName>
        <fullName evidence="1">ADP-L-glycero-beta-D-manno-heptose-6-epimerase</fullName>
        <shortName evidence="1">ADP-glyceromanno-heptose 6-epimerase</shortName>
        <shortName evidence="1">ADP-hep 6-epimerase</shortName>
        <shortName evidence="1">AGME</shortName>
    </alternativeName>
</protein>